<proteinExistence type="inferred from homology"/>
<reference key="1">
    <citation type="journal article" date="2008" name="Appl. Environ. Microbiol.">
        <title>Genome of the epsilonproteobacterial chemolithoautotroph Sulfurimonas denitrificans.</title>
        <authorList>
            <person name="Sievert S.M."/>
            <person name="Scott K.M."/>
            <person name="Klotz M.G."/>
            <person name="Chain P.S.G."/>
            <person name="Hauser L.J."/>
            <person name="Hemp J."/>
            <person name="Huegler M."/>
            <person name="Land M."/>
            <person name="Lapidus A."/>
            <person name="Larimer F.W."/>
            <person name="Lucas S."/>
            <person name="Malfatti S.A."/>
            <person name="Meyer F."/>
            <person name="Paulsen I.T."/>
            <person name="Ren Q."/>
            <person name="Simon J."/>
            <person name="Bailey K."/>
            <person name="Diaz E."/>
            <person name="Fitzpatrick K.A."/>
            <person name="Glover B."/>
            <person name="Gwatney N."/>
            <person name="Korajkic A."/>
            <person name="Long A."/>
            <person name="Mobberley J.M."/>
            <person name="Pantry S.N."/>
            <person name="Pazder G."/>
            <person name="Peterson S."/>
            <person name="Quintanilla J.D."/>
            <person name="Sprinkle R."/>
            <person name="Stephens J."/>
            <person name="Thomas P."/>
            <person name="Vaughn R."/>
            <person name="Weber M.J."/>
            <person name="Wooten L.L."/>
        </authorList>
    </citation>
    <scope>NUCLEOTIDE SEQUENCE [LARGE SCALE GENOMIC DNA]</scope>
    <source>
        <strain>ATCC 33889 / DSM 1251</strain>
    </source>
</reference>
<keyword id="KW-0067">ATP-binding</keyword>
<keyword id="KW-0315">Glutamine amidotransferase</keyword>
<keyword id="KW-0332">GMP biosynthesis</keyword>
<keyword id="KW-0436">Ligase</keyword>
<keyword id="KW-0547">Nucleotide-binding</keyword>
<keyword id="KW-0658">Purine biosynthesis</keyword>
<keyword id="KW-1185">Reference proteome</keyword>
<evidence type="ECO:0000255" key="1">
    <source>
        <dbReference type="HAMAP-Rule" id="MF_00344"/>
    </source>
</evidence>
<sequence>MTNVSIIVLDFGSQYTQLIARRLREDKIYCEILPYHTKVADIKAKNPQGIILSGGPSSVYNKDAYEVDQGVYKMDIPVLGICYGMQRIAADFGGSVVRASHHEYGKAELKILNLETNPSPLFKDCDDERIVWMSHSDKVDTLPAGFEPIAVSSNSPYAAIANEEKRIYAMQYHPEVQHSEEGYLMLRNFARNICGVTEKWKMEHFLKEQIKNIRAKVGSGKVLCGLSGGVDSSVVAAMLYEAIGDQLVPVFVDNGLLRKGEREQVEEVFKINLKVPLVVVDARENFLSKLAGVSDPEKKRKIIGHTFIEEFEKEAKKHDGIKFLAQGTLYPDVIESISVNGPSEVIKSHHNVGGLPDWMDFELIEPLRELFKDEVRKIGLELGLPESMINRHPFPGPGLAIRIMGDVNEADLTLLREADVILLDELKASGYYAKTWQAFVVLLNVKSVGVMGDNRTYDNTVCVRVVEAVDGMTATFAHLPHDLLERISRRIINEVDGINRVVYDISSKPPATIEWE</sequence>
<accession>Q30TH8</accession>
<comment type="function">
    <text evidence="1">Catalyzes the synthesis of GMP from XMP.</text>
</comment>
<comment type="catalytic activity">
    <reaction evidence="1">
        <text>XMP + L-glutamine + ATP + H2O = GMP + L-glutamate + AMP + diphosphate + 2 H(+)</text>
        <dbReference type="Rhea" id="RHEA:11680"/>
        <dbReference type="ChEBI" id="CHEBI:15377"/>
        <dbReference type="ChEBI" id="CHEBI:15378"/>
        <dbReference type="ChEBI" id="CHEBI:29985"/>
        <dbReference type="ChEBI" id="CHEBI:30616"/>
        <dbReference type="ChEBI" id="CHEBI:33019"/>
        <dbReference type="ChEBI" id="CHEBI:57464"/>
        <dbReference type="ChEBI" id="CHEBI:58115"/>
        <dbReference type="ChEBI" id="CHEBI:58359"/>
        <dbReference type="ChEBI" id="CHEBI:456215"/>
        <dbReference type="EC" id="6.3.5.2"/>
    </reaction>
</comment>
<comment type="pathway">
    <text evidence="1">Purine metabolism; GMP biosynthesis; GMP from XMP (L-Gln route): step 1/1.</text>
</comment>
<comment type="subunit">
    <text evidence="1">Homodimer.</text>
</comment>
<organism>
    <name type="scientific">Sulfurimonas denitrificans (strain ATCC 33889 / DSM 1251)</name>
    <name type="common">Thiomicrospira denitrificans (strain ATCC 33889 / DSM 1251)</name>
    <dbReference type="NCBI Taxonomy" id="326298"/>
    <lineage>
        <taxon>Bacteria</taxon>
        <taxon>Pseudomonadati</taxon>
        <taxon>Campylobacterota</taxon>
        <taxon>Epsilonproteobacteria</taxon>
        <taxon>Campylobacterales</taxon>
        <taxon>Sulfurimonadaceae</taxon>
        <taxon>Sulfurimonas</taxon>
    </lineage>
</organism>
<feature type="chain" id="PRO_0000229484" description="GMP synthase [glutamine-hydrolyzing]">
    <location>
        <begin position="1"/>
        <end position="516"/>
    </location>
</feature>
<feature type="domain" description="Glutamine amidotransferase type-1" evidence="1">
    <location>
        <begin position="5"/>
        <end position="199"/>
    </location>
</feature>
<feature type="domain" description="GMPS ATP-PPase" evidence="1">
    <location>
        <begin position="200"/>
        <end position="391"/>
    </location>
</feature>
<feature type="active site" description="Nucleophile" evidence="1">
    <location>
        <position position="82"/>
    </location>
</feature>
<feature type="active site" evidence="1">
    <location>
        <position position="173"/>
    </location>
</feature>
<feature type="active site" evidence="1">
    <location>
        <position position="175"/>
    </location>
</feature>
<feature type="binding site" evidence="1">
    <location>
        <begin position="227"/>
        <end position="233"/>
    </location>
    <ligand>
        <name>ATP</name>
        <dbReference type="ChEBI" id="CHEBI:30616"/>
    </ligand>
</feature>
<dbReference type="EC" id="6.3.5.2" evidence="1"/>
<dbReference type="EMBL" id="CP000153">
    <property type="protein sequence ID" value="ABB43703.1"/>
    <property type="molecule type" value="Genomic_DNA"/>
</dbReference>
<dbReference type="RefSeq" id="WP_011372057.1">
    <property type="nucleotide sequence ID" value="NC_007575.1"/>
</dbReference>
<dbReference type="SMR" id="Q30TH8"/>
<dbReference type="STRING" id="326298.Suden_0422"/>
<dbReference type="MEROPS" id="C26.957"/>
<dbReference type="KEGG" id="tdn:Suden_0422"/>
<dbReference type="eggNOG" id="COG0518">
    <property type="taxonomic scope" value="Bacteria"/>
</dbReference>
<dbReference type="eggNOG" id="COG0519">
    <property type="taxonomic scope" value="Bacteria"/>
</dbReference>
<dbReference type="HOGENOM" id="CLU_014340_0_5_7"/>
<dbReference type="OrthoDB" id="9802219at2"/>
<dbReference type="UniPathway" id="UPA00189">
    <property type="reaction ID" value="UER00296"/>
</dbReference>
<dbReference type="Proteomes" id="UP000002714">
    <property type="component" value="Chromosome"/>
</dbReference>
<dbReference type="GO" id="GO:0005829">
    <property type="term" value="C:cytosol"/>
    <property type="evidence" value="ECO:0007669"/>
    <property type="project" value="TreeGrafter"/>
</dbReference>
<dbReference type="GO" id="GO:0005524">
    <property type="term" value="F:ATP binding"/>
    <property type="evidence" value="ECO:0007669"/>
    <property type="project" value="UniProtKB-UniRule"/>
</dbReference>
<dbReference type="GO" id="GO:0003921">
    <property type="term" value="F:GMP synthase activity"/>
    <property type="evidence" value="ECO:0007669"/>
    <property type="project" value="InterPro"/>
</dbReference>
<dbReference type="CDD" id="cd01742">
    <property type="entry name" value="GATase1_GMP_Synthase"/>
    <property type="match status" value="1"/>
</dbReference>
<dbReference type="CDD" id="cd01997">
    <property type="entry name" value="GMP_synthase_C"/>
    <property type="match status" value="1"/>
</dbReference>
<dbReference type="FunFam" id="3.30.300.10:FF:000002">
    <property type="entry name" value="GMP synthase [glutamine-hydrolyzing]"/>
    <property type="match status" value="1"/>
</dbReference>
<dbReference type="FunFam" id="3.40.50.620:FF:000001">
    <property type="entry name" value="GMP synthase [glutamine-hydrolyzing]"/>
    <property type="match status" value="1"/>
</dbReference>
<dbReference type="FunFam" id="3.40.50.880:FF:000001">
    <property type="entry name" value="GMP synthase [glutamine-hydrolyzing]"/>
    <property type="match status" value="1"/>
</dbReference>
<dbReference type="Gene3D" id="3.30.300.10">
    <property type="match status" value="1"/>
</dbReference>
<dbReference type="Gene3D" id="3.40.50.880">
    <property type="match status" value="1"/>
</dbReference>
<dbReference type="Gene3D" id="3.40.50.620">
    <property type="entry name" value="HUPs"/>
    <property type="match status" value="1"/>
</dbReference>
<dbReference type="HAMAP" id="MF_00344">
    <property type="entry name" value="GMP_synthase"/>
    <property type="match status" value="1"/>
</dbReference>
<dbReference type="InterPro" id="IPR029062">
    <property type="entry name" value="Class_I_gatase-like"/>
</dbReference>
<dbReference type="InterPro" id="IPR017926">
    <property type="entry name" value="GATASE"/>
</dbReference>
<dbReference type="InterPro" id="IPR001674">
    <property type="entry name" value="GMP_synth_C"/>
</dbReference>
<dbReference type="InterPro" id="IPR004739">
    <property type="entry name" value="GMP_synth_GATase"/>
</dbReference>
<dbReference type="InterPro" id="IPR022955">
    <property type="entry name" value="GMP_synthase"/>
</dbReference>
<dbReference type="InterPro" id="IPR025777">
    <property type="entry name" value="GMPS_ATP_PPase_dom"/>
</dbReference>
<dbReference type="InterPro" id="IPR022310">
    <property type="entry name" value="NAD/GMP_synthase"/>
</dbReference>
<dbReference type="InterPro" id="IPR014729">
    <property type="entry name" value="Rossmann-like_a/b/a_fold"/>
</dbReference>
<dbReference type="NCBIfam" id="TIGR00884">
    <property type="entry name" value="guaA_Cterm"/>
    <property type="match status" value="1"/>
</dbReference>
<dbReference type="NCBIfam" id="TIGR00888">
    <property type="entry name" value="guaA_Nterm"/>
    <property type="match status" value="1"/>
</dbReference>
<dbReference type="NCBIfam" id="NF000848">
    <property type="entry name" value="PRK00074.1"/>
    <property type="match status" value="1"/>
</dbReference>
<dbReference type="PANTHER" id="PTHR11922:SF2">
    <property type="entry name" value="GMP SYNTHASE [GLUTAMINE-HYDROLYZING]"/>
    <property type="match status" value="1"/>
</dbReference>
<dbReference type="PANTHER" id="PTHR11922">
    <property type="entry name" value="GMP SYNTHASE-RELATED"/>
    <property type="match status" value="1"/>
</dbReference>
<dbReference type="Pfam" id="PF00117">
    <property type="entry name" value="GATase"/>
    <property type="match status" value="1"/>
</dbReference>
<dbReference type="Pfam" id="PF00958">
    <property type="entry name" value="GMP_synt_C"/>
    <property type="match status" value="1"/>
</dbReference>
<dbReference type="Pfam" id="PF02540">
    <property type="entry name" value="NAD_synthase"/>
    <property type="match status" value="1"/>
</dbReference>
<dbReference type="PRINTS" id="PR00097">
    <property type="entry name" value="ANTSNTHASEII"/>
</dbReference>
<dbReference type="PRINTS" id="PR00099">
    <property type="entry name" value="CPSGATASE"/>
</dbReference>
<dbReference type="PRINTS" id="PR00096">
    <property type="entry name" value="GATASE"/>
</dbReference>
<dbReference type="SUPFAM" id="SSF52402">
    <property type="entry name" value="Adenine nucleotide alpha hydrolases-like"/>
    <property type="match status" value="1"/>
</dbReference>
<dbReference type="SUPFAM" id="SSF52317">
    <property type="entry name" value="Class I glutamine amidotransferase-like"/>
    <property type="match status" value="1"/>
</dbReference>
<dbReference type="SUPFAM" id="SSF54810">
    <property type="entry name" value="GMP synthetase C-terminal dimerisation domain"/>
    <property type="match status" value="1"/>
</dbReference>
<dbReference type="PROSITE" id="PS51273">
    <property type="entry name" value="GATASE_TYPE_1"/>
    <property type="match status" value="1"/>
</dbReference>
<dbReference type="PROSITE" id="PS51553">
    <property type="entry name" value="GMPS_ATP_PPASE"/>
    <property type="match status" value="1"/>
</dbReference>
<name>GUAA_SULDN</name>
<gene>
    <name evidence="1" type="primary">guaA</name>
    <name type="ordered locus">Suden_0422</name>
</gene>
<protein>
    <recommendedName>
        <fullName evidence="1">GMP synthase [glutamine-hydrolyzing]</fullName>
        <ecNumber evidence="1">6.3.5.2</ecNumber>
    </recommendedName>
    <alternativeName>
        <fullName evidence="1">GMP synthetase</fullName>
    </alternativeName>
    <alternativeName>
        <fullName evidence="1">Glutamine amidotransferase</fullName>
    </alternativeName>
</protein>